<protein>
    <recommendedName>
        <fullName evidence="1">p-hydroxybenzoic acid efflux pump subunit AaeB</fullName>
        <shortName evidence="1">pHBA efflux pump protein B</shortName>
    </recommendedName>
</protein>
<proteinExistence type="inferred from homology"/>
<keyword id="KW-0997">Cell inner membrane</keyword>
<keyword id="KW-1003">Cell membrane</keyword>
<keyword id="KW-0472">Membrane</keyword>
<keyword id="KW-0812">Transmembrane</keyword>
<keyword id="KW-1133">Transmembrane helix</keyword>
<keyword id="KW-0813">Transport</keyword>
<organism>
    <name type="scientific">Yersinia pestis bv. Antiqua (strain Nepal516)</name>
    <dbReference type="NCBI Taxonomy" id="377628"/>
    <lineage>
        <taxon>Bacteria</taxon>
        <taxon>Pseudomonadati</taxon>
        <taxon>Pseudomonadota</taxon>
        <taxon>Gammaproteobacteria</taxon>
        <taxon>Enterobacterales</taxon>
        <taxon>Yersiniaceae</taxon>
        <taxon>Yersinia</taxon>
    </lineage>
</organism>
<dbReference type="EMBL" id="CP000305">
    <property type="protein sequence ID" value="ABG19813.1"/>
    <property type="molecule type" value="Genomic_DNA"/>
</dbReference>
<dbReference type="EMBL" id="ACNQ01000019">
    <property type="protein sequence ID" value="EEO74363.1"/>
    <property type="molecule type" value="Genomic_DNA"/>
</dbReference>
<dbReference type="RefSeq" id="WP_002210095.1">
    <property type="nucleotide sequence ID" value="NZ_ACNQ01000019.1"/>
</dbReference>
<dbReference type="SMR" id="Q1CDW7"/>
<dbReference type="GeneID" id="57975111"/>
<dbReference type="KEGG" id="ypn:YPN_3486"/>
<dbReference type="HOGENOM" id="CLU_027647_0_0_6"/>
<dbReference type="Proteomes" id="UP000008936">
    <property type="component" value="Chromosome"/>
</dbReference>
<dbReference type="GO" id="GO:0005886">
    <property type="term" value="C:plasma membrane"/>
    <property type="evidence" value="ECO:0007669"/>
    <property type="project" value="UniProtKB-SubCell"/>
</dbReference>
<dbReference type="GO" id="GO:0022857">
    <property type="term" value="F:transmembrane transporter activity"/>
    <property type="evidence" value="ECO:0007669"/>
    <property type="project" value="UniProtKB-UniRule"/>
</dbReference>
<dbReference type="GO" id="GO:0046942">
    <property type="term" value="P:carboxylic acid transport"/>
    <property type="evidence" value="ECO:0007669"/>
    <property type="project" value="InterPro"/>
</dbReference>
<dbReference type="HAMAP" id="MF_01545">
    <property type="entry name" value="AaeB"/>
    <property type="match status" value="1"/>
</dbReference>
<dbReference type="InterPro" id="IPR006726">
    <property type="entry name" value="PHBA_efflux_AaeB/fusaric-R"/>
</dbReference>
<dbReference type="InterPro" id="IPR023706">
    <property type="entry name" value="PHBA_efflux_pump_AaeB"/>
</dbReference>
<dbReference type="NCBIfam" id="NF007916">
    <property type="entry name" value="PRK10631.1"/>
    <property type="match status" value="1"/>
</dbReference>
<dbReference type="PANTHER" id="PTHR30509:SF9">
    <property type="entry name" value="MULTIDRUG RESISTANCE PROTEIN MDTO"/>
    <property type="match status" value="1"/>
</dbReference>
<dbReference type="PANTHER" id="PTHR30509">
    <property type="entry name" value="P-HYDROXYBENZOIC ACID EFFLUX PUMP SUBUNIT-RELATED"/>
    <property type="match status" value="1"/>
</dbReference>
<dbReference type="Pfam" id="PF04632">
    <property type="entry name" value="FUSC"/>
    <property type="match status" value="1"/>
</dbReference>
<name>AAEB_YERPN</name>
<comment type="function">
    <text evidence="1">Forms an efflux pump with AaeA. Could function as a metabolic relief valve, allowing to eliminate certain compounds when they accumulate to high levels in the cell.</text>
</comment>
<comment type="subcellular location">
    <subcellularLocation>
        <location evidence="1">Cell inner membrane</location>
        <topology evidence="1">Multi-pass membrane protein</topology>
    </subcellularLocation>
</comment>
<comment type="similarity">
    <text evidence="1">Belongs to the aromatic acid exporter ArAE (TC 2.A.85) family.</text>
</comment>
<sequence length="651" mass="72437">MTHPSFIRLRFAFKLSFAIVAALFLGFHLQLETPRWSVLTAAIVSAGPAFAAGGEPFSGAIRHRGWLRIIGTFIGCIGGLVIIVLTIRAPVLTLMLCCLWAGICTWISSLVRVENSYAFGLAGYTALIIIVTTGETPLLTPQFAVERCSEIVLGIVCAVMADLLFSPRSIKQDIDRLVDKVLVDQYRLLQLCIQPAEKSEIDRAWNELVKNTTSLNGMRSYLMMESSRWQRCNRRLQVLHTESLALITQACETYLVMSNHPEVISAELKTMLSEPAQTPAEIHQQMKKLRQFIAASHSEAIPHTISSWVGAATRYLLLSKGIQTNSSINQVEEDILAGDAPVKPISAEGHHAMINGLRTGIATAIGGLFWLWTGWTSGAGCMVMIAVVTSLAMRTPNPRRMALDFLVGVIIALPIGALYFMFIIPSTQQSMLLLCISLGVLAFIIGIEVQKRRLGSLGTLASTINIIVLSNPMIFNVRQFLDSALGQIVGCFVSLIVLLLIRDNAKDRTGRTLLNRFVYSAVSALTTNKTKRGENHLPALYQQLNQLLMMFPADIDKYRLALTLIIAHQRLNRTEIPVNAELSAFHKQIRSTAERVITVNNDQKRRYYFARLLQELDQYQQKLVDYQAADAVIRPVKRLTEMLRKYQSALI</sequence>
<evidence type="ECO:0000255" key="1">
    <source>
        <dbReference type="HAMAP-Rule" id="MF_01545"/>
    </source>
</evidence>
<gene>
    <name evidence="1" type="primary">aaeB</name>
    <name type="ordered locus">YPN_3486</name>
    <name type="ORF">YP516_3959</name>
</gene>
<feature type="chain" id="PRO_0000300571" description="p-hydroxybenzoic acid efflux pump subunit AaeB">
    <location>
        <begin position="1"/>
        <end position="651"/>
    </location>
</feature>
<feature type="transmembrane region" description="Helical" evidence="1">
    <location>
        <begin position="11"/>
        <end position="31"/>
    </location>
</feature>
<feature type="transmembrane region" description="Helical" evidence="1">
    <location>
        <begin position="41"/>
        <end position="61"/>
    </location>
</feature>
<feature type="transmembrane region" description="Helical" evidence="1">
    <location>
        <begin position="67"/>
        <end position="87"/>
    </location>
</feature>
<feature type="transmembrane region" description="Helical" evidence="1">
    <location>
        <begin position="91"/>
        <end position="111"/>
    </location>
</feature>
<feature type="transmembrane region" description="Helical" evidence="1">
    <location>
        <begin position="119"/>
        <end position="139"/>
    </location>
</feature>
<feature type="transmembrane region" description="Helical" evidence="1">
    <location>
        <begin position="150"/>
        <end position="170"/>
    </location>
</feature>
<feature type="transmembrane region" description="Helical" evidence="1">
    <location>
        <begin position="368"/>
        <end position="388"/>
    </location>
</feature>
<feature type="transmembrane region" description="Helical" evidence="1">
    <location>
        <begin position="405"/>
        <end position="425"/>
    </location>
</feature>
<feature type="transmembrane region" description="Helical" evidence="1">
    <location>
        <begin position="429"/>
        <end position="449"/>
    </location>
</feature>
<feature type="transmembrane region" description="Helical" evidence="1">
    <location>
        <begin position="455"/>
        <end position="475"/>
    </location>
</feature>
<feature type="transmembrane region" description="Helical" evidence="1">
    <location>
        <begin position="481"/>
        <end position="501"/>
    </location>
</feature>
<reference key="1">
    <citation type="journal article" date="2006" name="J. Bacteriol.">
        <title>Complete genome sequence of Yersinia pestis strains Antiqua and Nepal516: evidence of gene reduction in an emerging pathogen.</title>
        <authorList>
            <person name="Chain P.S.G."/>
            <person name="Hu P."/>
            <person name="Malfatti S.A."/>
            <person name="Radnedge L."/>
            <person name="Larimer F."/>
            <person name="Vergez L.M."/>
            <person name="Worsham P."/>
            <person name="Chu M.C."/>
            <person name="Andersen G.L."/>
        </authorList>
    </citation>
    <scope>NUCLEOTIDE SEQUENCE [LARGE SCALE GENOMIC DNA]</scope>
    <source>
        <strain>Nepal516</strain>
    </source>
</reference>
<reference key="2">
    <citation type="submission" date="2009-04" db="EMBL/GenBank/DDBJ databases">
        <title>Yersinia pestis Nepal516A whole genome shotgun sequencing project.</title>
        <authorList>
            <person name="Plunkett G. III"/>
            <person name="Anderson B.D."/>
            <person name="Baumler D.J."/>
            <person name="Burland V."/>
            <person name="Cabot E.L."/>
            <person name="Glasner J.D."/>
            <person name="Mau B."/>
            <person name="Neeno-Eckwall E."/>
            <person name="Perna N.T."/>
            <person name="Munk A.C."/>
            <person name="Tapia R."/>
            <person name="Green L.D."/>
            <person name="Rogers Y.C."/>
            <person name="Detter J.C."/>
            <person name="Bruce D.C."/>
            <person name="Brettin T.S."/>
        </authorList>
    </citation>
    <scope>NUCLEOTIDE SEQUENCE [LARGE SCALE GENOMIC DNA]</scope>
    <source>
        <strain>Nepal516</strain>
    </source>
</reference>
<accession>Q1CDW7</accession>
<accession>D1Q1G0</accession>